<dbReference type="EMBL" id="CP000803">
    <property type="protein sequence ID" value="ABU60725.1"/>
    <property type="molecule type" value="Genomic_DNA"/>
</dbReference>
<dbReference type="RefSeq" id="WP_003014323.1">
    <property type="nucleotide sequence ID" value="NC_009749.1"/>
</dbReference>
<dbReference type="SMR" id="A7N9S2"/>
<dbReference type="KEGG" id="fta:FTA_0248"/>
<dbReference type="HOGENOM" id="CLU_104295_1_2_6"/>
<dbReference type="GO" id="GO:0015935">
    <property type="term" value="C:small ribosomal subunit"/>
    <property type="evidence" value="ECO:0007669"/>
    <property type="project" value="InterPro"/>
</dbReference>
<dbReference type="GO" id="GO:0019843">
    <property type="term" value="F:rRNA binding"/>
    <property type="evidence" value="ECO:0007669"/>
    <property type="project" value="UniProtKB-UniRule"/>
</dbReference>
<dbReference type="GO" id="GO:0003735">
    <property type="term" value="F:structural constituent of ribosome"/>
    <property type="evidence" value="ECO:0007669"/>
    <property type="project" value="InterPro"/>
</dbReference>
<dbReference type="GO" id="GO:0000049">
    <property type="term" value="F:tRNA binding"/>
    <property type="evidence" value="ECO:0007669"/>
    <property type="project" value="UniProtKB-UniRule"/>
</dbReference>
<dbReference type="GO" id="GO:0006412">
    <property type="term" value="P:translation"/>
    <property type="evidence" value="ECO:0007669"/>
    <property type="project" value="UniProtKB-UniRule"/>
</dbReference>
<dbReference type="CDD" id="cd03368">
    <property type="entry name" value="Ribosomal_S12"/>
    <property type="match status" value="1"/>
</dbReference>
<dbReference type="FunFam" id="2.40.50.140:FF:000001">
    <property type="entry name" value="30S ribosomal protein S12"/>
    <property type="match status" value="1"/>
</dbReference>
<dbReference type="Gene3D" id="2.40.50.140">
    <property type="entry name" value="Nucleic acid-binding proteins"/>
    <property type="match status" value="1"/>
</dbReference>
<dbReference type="HAMAP" id="MF_00403_B">
    <property type="entry name" value="Ribosomal_uS12_B"/>
    <property type="match status" value="1"/>
</dbReference>
<dbReference type="InterPro" id="IPR012340">
    <property type="entry name" value="NA-bd_OB-fold"/>
</dbReference>
<dbReference type="InterPro" id="IPR006032">
    <property type="entry name" value="Ribosomal_uS12"/>
</dbReference>
<dbReference type="InterPro" id="IPR005679">
    <property type="entry name" value="Ribosomal_uS12_bac"/>
</dbReference>
<dbReference type="NCBIfam" id="TIGR00981">
    <property type="entry name" value="rpsL_bact"/>
    <property type="match status" value="1"/>
</dbReference>
<dbReference type="PANTHER" id="PTHR11652">
    <property type="entry name" value="30S RIBOSOMAL PROTEIN S12 FAMILY MEMBER"/>
    <property type="match status" value="1"/>
</dbReference>
<dbReference type="Pfam" id="PF00164">
    <property type="entry name" value="Ribosom_S12_S23"/>
    <property type="match status" value="1"/>
</dbReference>
<dbReference type="PIRSF" id="PIRSF002133">
    <property type="entry name" value="Ribosomal_S12/S23"/>
    <property type="match status" value="1"/>
</dbReference>
<dbReference type="PRINTS" id="PR01034">
    <property type="entry name" value="RIBOSOMALS12"/>
</dbReference>
<dbReference type="SUPFAM" id="SSF50249">
    <property type="entry name" value="Nucleic acid-binding proteins"/>
    <property type="match status" value="1"/>
</dbReference>
<dbReference type="PROSITE" id="PS00055">
    <property type="entry name" value="RIBOSOMAL_S12"/>
    <property type="match status" value="1"/>
</dbReference>
<protein>
    <recommendedName>
        <fullName evidence="2">Small ribosomal subunit protein uS12</fullName>
    </recommendedName>
    <alternativeName>
        <fullName evidence="4">30S ribosomal protein S12</fullName>
    </alternativeName>
</protein>
<organism>
    <name type="scientific">Francisella tularensis subsp. holarctica (strain FTNF002-00 / FTA)</name>
    <dbReference type="NCBI Taxonomy" id="458234"/>
    <lineage>
        <taxon>Bacteria</taxon>
        <taxon>Pseudomonadati</taxon>
        <taxon>Pseudomonadota</taxon>
        <taxon>Gammaproteobacteria</taxon>
        <taxon>Thiotrichales</taxon>
        <taxon>Francisellaceae</taxon>
        <taxon>Francisella</taxon>
    </lineage>
</organism>
<name>RS12_FRATF</name>
<comment type="function">
    <text evidence="2">With S4 and S5 plays an important role in translational accuracy.</text>
</comment>
<comment type="function">
    <text evidence="2">Interacts with and stabilizes bases of the 16S rRNA that are involved in tRNA selection in the A site and with the mRNA backbone. Located at the interface of the 30S and 50S subunits, it traverses the body of the 30S subunit contacting proteins on the other side and probably holding the rRNA structure together. The combined cluster of proteins S8, S12 and S17 appears to hold together the shoulder and platform of the 30S subunit.</text>
</comment>
<comment type="subunit">
    <text evidence="2">Part of the 30S ribosomal subunit. Contacts proteins S8 and S17. May interact with IF1 in the 30S initiation complex.</text>
</comment>
<comment type="similarity">
    <text evidence="2">Belongs to the universal ribosomal protein uS12 family.</text>
</comment>
<feature type="chain" id="PRO_1000049785" description="Small ribosomal subunit protein uS12">
    <location>
        <begin position="1"/>
        <end position="124"/>
    </location>
</feature>
<feature type="region of interest" description="Disordered" evidence="3">
    <location>
        <begin position="102"/>
        <end position="124"/>
    </location>
</feature>
<feature type="compositionally biased region" description="Basic residues" evidence="3">
    <location>
        <begin position="109"/>
        <end position="124"/>
    </location>
</feature>
<feature type="modified residue" description="3-methylthioaspartic acid" evidence="1">
    <location>
        <position position="89"/>
    </location>
</feature>
<reference key="1">
    <citation type="journal article" date="2009" name="PLoS ONE">
        <title>Complete genome sequence of Francisella tularensis subspecies holarctica FTNF002-00.</title>
        <authorList>
            <person name="Barabote R.D."/>
            <person name="Xie G."/>
            <person name="Brettin T.S."/>
            <person name="Hinrichs S.H."/>
            <person name="Fey P.D."/>
            <person name="Jay J.J."/>
            <person name="Engle J.L."/>
            <person name="Godbole S.D."/>
            <person name="Noronha J.M."/>
            <person name="Scheuermann R.H."/>
            <person name="Zhou L.W."/>
            <person name="Lion C."/>
            <person name="Dempsey M.P."/>
        </authorList>
    </citation>
    <scope>NUCLEOTIDE SEQUENCE [LARGE SCALE GENOMIC DNA]</scope>
    <source>
        <strain>FTNF002-00 / FTA</strain>
    </source>
</reference>
<keyword id="KW-0488">Methylation</keyword>
<keyword id="KW-0687">Ribonucleoprotein</keyword>
<keyword id="KW-0689">Ribosomal protein</keyword>
<keyword id="KW-0694">RNA-binding</keyword>
<keyword id="KW-0699">rRNA-binding</keyword>
<keyword id="KW-0820">tRNA-binding</keyword>
<proteinExistence type="inferred from homology"/>
<evidence type="ECO:0000250" key="1"/>
<evidence type="ECO:0000255" key="2">
    <source>
        <dbReference type="HAMAP-Rule" id="MF_00403"/>
    </source>
</evidence>
<evidence type="ECO:0000256" key="3">
    <source>
        <dbReference type="SAM" id="MobiDB-lite"/>
    </source>
</evidence>
<evidence type="ECO:0000305" key="4"/>
<gene>
    <name evidence="2" type="primary">rpsL</name>
    <name type="ordered locus">FTA_0248</name>
</gene>
<sequence length="124" mass="13814">MATINQLVNNPRKRSVVKSKVPALKACPQRRGVCTRVYTTTPKKPNSALRKVARVRLTSRFEVTSYIGGEGHNLQEHSVVLIRGGRVKDLPGVRYHIVRGALDTSGVNNRKHGRSKYGTKRPKS</sequence>
<accession>A7N9S2</accession>